<sequence length="244" mass="27691">MRNILLTIEYDGTNYFGWQKQPNKKTVQGVIEDAIKKITGEDVNLVGSGRTDRGVHALGQKANFKTESKIPTEKFPLALNSVLPNDISIKDAAEVSLDFSARYSAKQKTYKYLIYNHKFRPAILCNYVYHFPYELDLVSMQKSCEYFIGEYDFSSFCSSGSETNSKVRRIFDCYLTFENDCIAIYITANGFLYNMARIIAGTILDVGVGRFKPTDIPLIIESKDRTKAGKTLPPWGLYLVDVVY</sequence>
<proteinExistence type="inferred from homology"/>
<evidence type="ECO:0000255" key="1">
    <source>
        <dbReference type="HAMAP-Rule" id="MF_00171"/>
    </source>
</evidence>
<organism>
    <name type="scientific">Caldicellulosiruptor saccharolyticus (strain ATCC 43494 / DSM 8903 / Tp8T 6331)</name>
    <dbReference type="NCBI Taxonomy" id="351627"/>
    <lineage>
        <taxon>Bacteria</taxon>
        <taxon>Bacillati</taxon>
        <taxon>Bacillota</taxon>
        <taxon>Bacillota incertae sedis</taxon>
        <taxon>Caldicellulosiruptorales</taxon>
        <taxon>Caldicellulosiruptoraceae</taxon>
        <taxon>Caldicellulosiruptor</taxon>
    </lineage>
</organism>
<comment type="function">
    <text evidence="1">Formation of pseudouridine at positions 38, 39 and 40 in the anticodon stem and loop of transfer RNAs.</text>
</comment>
<comment type="catalytic activity">
    <reaction evidence="1">
        <text>uridine(38/39/40) in tRNA = pseudouridine(38/39/40) in tRNA</text>
        <dbReference type="Rhea" id="RHEA:22376"/>
        <dbReference type="Rhea" id="RHEA-COMP:10085"/>
        <dbReference type="Rhea" id="RHEA-COMP:10087"/>
        <dbReference type="ChEBI" id="CHEBI:65314"/>
        <dbReference type="ChEBI" id="CHEBI:65315"/>
        <dbReference type="EC" id="5.4.99.12"/>
    </reaction>
</comment>
<comment type="subunit">
    <text evidence="1">Homodimer.</text>
</comment>
<comment type="similarity">
    <text evidence="1">Belongs to the tRNA pseudouridine synthase TruA family.</text>
</comment>
<accession>A4XKB7</accession>
<dbReference type="EC" id="5.4.99.12" evidence="1"/>
<dbReference type="EMBL" id="CP000679">
    <property type="protein sequence ID" value="ABP67352.1"/>
    <property type="molecule type" value="Genomic_DNA"/>
</dbReference>
<dbReference type="RefSeq" id="WP_011917286.1">
    <property type="nucleotide sequence ID" value="NC_009437.1"/>
</dbReference>
<dbReference type="SMR" id="A4XKB7"/>
<dbReference type="STRING" id="351627.Csac_1765"/>
<dbReference type="KEGG" id="csc:Csac_1765"/>
<dbReference type="eggNOG" id="COG0101">
    <property type="taxonomic scope" value="Bacteria"/>
</dbReference>
<dbReference type="HOGENOM" id="CLU_014673_0_1_9"/>
<dbReference type="OrthoDB" id="9811823at2"/>
<dbReference type="Proteomes" id="UP000000256">
    <property type="component" value="Chromosome"/>
</dbReference>
<dbReference type="GO" id="GO:0003723">
    <property type="term" value="F:RNA binding"/>
    <property type="evidence" value="ECO:0007669"/>
    <property type="project" value="InterPro"/>
</dbReference>
<dbReference type="GO" id="GO:0160147">
    <property type="term" value="F:tRNA pseudouridine(38-40) synthase activity"/>
    <property type="evidence" value="ECO:0007669"/>
    <property type="project" value="UniProtKB-EC"/>
</dbReference>
<dbReference type="GO" id="GO:0031119">
    <property type="term" value="P:tRNA pseudouridine synthesis"/>
    <property type="evidence" value="ECO:0007669"/>
    <property type="project" value="UniProtKB-UniRule"/>
</dbReference>
<dbReference type="CDD" id="cd02570">
    <property type="entry name" value="PseudoU_synth_EcTruA"/>
    <property type="match status" value="1"/>
</dbReference>
<dbReference type="FunFam" id="3.30.70.580:FF:000001">
    <property type="entry name" value="tRNA pseudouridine synthase A"/>
    <property type="match status" value="1"/>
</dbReference>
<dbReference type="Gene3D" id="3.30.70.660">
    <property type="entry name" value="Pseudouridine synthase I, catalytic domain, C-terminal subdomain"/>
    <property type="match status" value="1"/>
</dbReference>
<dbReference type="Gene3D" id="3.30.70.580">
    <property type="entry name" value="Pseudouridine synthase I, catalytic domain, N-terminal subdomain"/>
    <property type="match status" value="1"/>
</dbReference>
<dbReference type="HAMAP" id="MF_00171">
    <property type="entry name" value="TruA"/>
    <property type="match status" value="1"/>
</dbReference>
<dbReference type="InterPro" id="IPR020103">
    <property type="entry name" value="PsdUridine_synth_cat_dom_sf"/>
</dbReference>
<dbReference type="InterPro" id="IPR001406">
    <property type="entry name" value="PsdUridine_synth_TruA"/>
</dbReference>
<dbReference type="InterPro" id="IPR020097">
    <property type="entry name" value="PsdUridine_synth_TruA_a/b_dom"/>
</dbReference>
<dbReference type="InterPro" id="IPR020095">
    <property type="entry name" value="PsdUridine_synth_TruA_C"/>
</dbReference>
<dbReference type="InterPro" id="IPR020094">
    <property type="entry name" value="TruA/RsuA/RluB/E/F_N"/>
</dbReference>
<dbReference type="NCBIfam" id="TIGR00071">
    <property type="entry name" value="hisT_truA"/>
    <property type="match status" value="1"/>
</dbReference>
<dbReference type="PANTHER" id="PTHR11142">
    <property type="entry name" value="PSEUDOURIDYLATE SYNTHASE"/>
    <property type="match status" value="1"/>
</dbReference>
<dbReference type="PANTHER" id="PTHR11142:SF0">
    <property type="entry name" value="TRNA PSEUDOURIDINE SYNTHASE-LIKE 1"/>
    <property type="match status" value="1"/>
</dbReference>
<dbReference type="Pfam" id="PF01416">
    <property type="entry name" value="PseudoU_synth_1"/>
    <property type="match status" value="2"/>
</dbReference>
<dbReference type="PIRSF" id="PIRSF001430">
    <property type="entry name" value="tRNA_psdUrid_synth"/>
    <property type="match status" value="1"/>
</dbReference>
<dbReference type="SUPFAM" id="SSF55120">
    <property type="entry name" value="Pseudouridine synthase"/>
    <property type="match status" value="1"/>
</dbReference>
<keyword id="KW-0413">Isomerase</keyword>
<keyword id="KW-0819">tRNA processing</keyword>
<reference key="1">
    <citation type="submission" date="2007-04" db="EMBL/GenBank/DDBJ databases">
        <title>Genome sequence of the thermophilic hydrogen-producing bacterium Caldicellulosiruptor saccharolyticus DSM 8903.</title>
        <authorList>
            <person name="Copeland A."/>
            <person name="Lucas S."/>
            <person name="Lapidus A."/>
            <person name="Barry K."/>
            <person name="Detter J.C."/>
            <person name="Glavina del Rio T."/>
            <person name="Hammon N."/>
            <person name="Israni S."/>
            <person name="Dalin E."/>
            <person name="Tice H."/>
            <person name="Pitluck S."/>
            <person name="Kiss H."/>
            <person name="Brettin T."/>
            <person name="Bruce D."/>
            <person name="Han C."/>
            <person name="Schmutz J."/>
            <person name="Larimer F."/>
            <person name="Land M."/>
            <person name="Hauser L."/>
            <person name="Kyrpides N."/>
            <person name="Lykidis A."/>
            <person name="van de Werken H.J.G."/>
            <person name="Verhaart M.R.A."/>
            <person name="VanFossen A.L."/>
            <person name="Lewis D.L."/>
            <person name="Nichols J.D."/>
            <person name="Goorissen H.P."/>
            <person name="van Niel E.W.J."/>
            <person name="Stams F.J.M."/>
            <person name="Willquist K.U."/>
            <person name="Ward D.E."/>
            <person name="van der Oost J."/>
            <person name="Kelly R.M."/>
            <person name="Kengen S.M.W."/>
            <person name="Richardson P."/>
        </authorList>
    </citation>
    <scope>NUCLEOTIDE SEQUENCE [LARGE SCALE GENOMIC DNA]</scope>
    <source>
        <strain>ATCC 43494 / DSM 8903 / Tp8T 6331</strain>
    </source>
</reference>
<feature type="chain" id="PRO_1000017062" description="tRNA pseudouridine synthase A">
    <location>
        <begin position="1"/>
        <end position="244"/>
    </location>
</feature>
<feature type="active site" description="Nucleophile" evidence="1">
    <location>
        <position position="52"/>
    </location>
</feature>
<feature type="binding site" evidence="1">
    <location>
        <position position="110"/>
    </location>
    <ligand>
        <name>substrate</name>
    </ligand>
</feature>
<protein>
    <recommendedName>
        <fullName evidence="1">tRNA pseudouridine synthase A</fullName>
        <ecNumber evidence="1">5.4.99.12</ecNumber>
    </recommendedName>
    <alternativeName>
        <fullName evidence="1">tRNA pseudouridine(38-40) synthase</fullName>
    </alternativeName>
    <alternativeName>
        <fullName evidence="1">tRNA pseudouridylate synthase I</fullName>
    </alternativeName>
    <alternativeName>
        <fullName evidence="1">tRNA-uridine isomerase I</fullName>
    </alternativeName>
</protein>
<gene>
    <name evidence="1" type="primary">truA</name>
    <name type="ordered locus">Csac_1765</name>
</gene>
<name>TRUA_CALS8</name>